<dbReference type="EC" id="7.4.2.8" evidence="1"/>
<dbReference type="EMBL" id="CP001150">
    <property type="protein sequence ID" value="ACM02425.1"/>
    <property type="molecule type" value="Genomic_DNA"/>
</dbReference>
<dbReference type="RefSeq" id="WP_002721626.1">
    <property type="nucleotide sequence ID" value="NC_011963.1"/>
</dbReference>
<dbReference type="SMR" id="B9KPP0"/>
<dbReference type="GeneID" id="67447943"/>
<dbReference type="KEGG" id="rsk:RSKD131_2565"/>
<dbReference type="HOGENOM" id="CLU_005314_3_0_5"/>
<dbReference type="GO" id="GO:0031522">
    <property type="term" value="C:cell envelope Sec protein transport complex"/>
    <property type="evidence" value="ECO:0007669"/>
    <property type="project" value="TreeGrafter"/>
</dbReference>
<dbReference type="GO" id="GO:0005829">
    <property type="term" value="C:cytosol"/>
    <property type="evidence" value="ECO:0007669"/>
    <property type="project" value="TreeGrafter"/>
</dbReference>
<dbReference type="GO" id="GO:0005886">
    <property type="term" value="C:plasma membrane"/>
    <property type="evidence" value="ECO:0007669"/>
    <property type="project" value="UniProtKB-SubCell"/>
</dbReference>
<dbReference type="GO" id="GO:0005524">
    <property type="term" value="F:ATP binding"/>
    <property type="evidence" value="ECO:0007669"/>
    <property type="project" value="UniProtKB-UniRule"/>
</dbReference>
<dbReference type="GO" id="GO:0046872">
    <property type="term" value="F:metal ion binding"/>
    <property type="evidence" value="ECO:0007669"/>
    <property type="project" value="UniProtKB-KW"/>
</dbReference>
<dbReference type="GO" id="GO:0008564">
    <property type="term" value="F:protein-exporting ATPase activity"/>
    <property type="evidence" value="ECO:0007669"/>
    <property type="project" value="UniProtKB-EC"/>
</dbReference>
<dbReference type="GO" id="GO:0065002">
    <property type="term" value="P:intracellular protein transmembrane transport"/>
    <property type="evidence" value="ECO:0007669"/>
    <property type="project" value="UniProtKB-UniRule"/>
</dbReference>
<dbReference type="GO" id="GO:0017038">
    <property type="term" value="P:protein import"/>
    <property type="evidence" value="ECO:0007669"/>
    <property type="project" value="InterPro"/>
</dbReference>
<dbReference type="GO" id="GO:0006605">
    <property type="term" value="P:protein targeting"/>
    <property type="evidence" value="ECO:0007669"/>
    <property type="project" value="UniProtKB-UniRule"/>
</dbReference>
<dbReference type="GO" id="GO:0043952">
    <property type="term" value="P:protein transport by the Sec complex"/>
    <property type="evidence" value="ECO:0007669"/>
    <property type="project" value="TreeGrafter"/>
</dbReference>
<dbReference type="CDD" id="cd17928">
    <property type="entry name" value="DEXDc_SecA"/>
    <property type="match status" value="1"/>
</dbReference>
<dbReference type="CDD" id="cd18803">
    <property type="entry name" value="SF2_C_secA"/>
    <property type="match status" value="1"/>
</dbReference>
<dbReference type="FunFam" id="3.40.50.300:FF:000113">
    <property type="entry name" value="Preprotein translocase subunit SecA"/>
    <property type="match status" value="1"/>
</dbReference>
<dbReference type="FunFam" id="3.90.1440.10:FF:000001">
    <property type="entry name" value="Preprotein translocase subunit SecA"/>
    <property type="match status" value="1"/>
</dbReference>
<dbReference type="FunFam" id="1.10.3060.10:FF:000003">
    <property type="entry name" value="Protein translocase subunit SecA"/>
    <property type="match status" value="1"/>
</dbReference>
<dbReference type="Gene3D" id="1.10.3060.10">
    <property type="entry name" value="Helical scaffold and wing domains of SecA"/>
    <property type="match status" value="1"/>
</dbReference>
<dbReference type="Gene3D" id="3.40.50.300">
    <property type="entry name" value="P-loop containing nucleotide triphosphate hydrolases"/>
    <property type="match status" value="2"/>
</dbReference>
<dbReference type="Gene3D" id="3.90.1440.10">
    <property type="entry name" value="SecA, preprotein cross-linking domain"/>
    <property type="match status" value="1"/>
</dbReference>
<dbReference type="HAMAP" id="MF_01382">
    <property type="entry name" value="SecA"/>
    <property type="match status" value="1"/>
</dbReference>
<dbReference type="InterPro" id="IPR014001">
    <property type="entry name" value="Helicase_ATP-bd"/>
</dbReference>
<dbReference type="InterPro" id="IPR001650">
    <property type="entry name" value="Helicase_C-like"/>
</dbReference>
<dbReference type="InterPro" id="IPR027417">
    <property type="entry name" value="P-loop_NTPase"/>
</dbReference>
<dbReference type="InterPro" id="IPR004027">
    <property type="entry name" value="SEC_C_motif"/>
</dbReference>
<dbReference type="InterPro" id="IPR000185">
    <property type="entry name" value="SecA"/>
</dbReference>
<dbReference type="InterPro" id="IPR020937">
    <property type="entry name" value="SecA_CS"/>
</dbReference>
<dbReference type="InterPro" id="IPR011115">
    <property type="entry name" value="SecA_DEAD"/>
</dbReference>
<dbReference type="InterPro" id="IPR014018">
    <property type="entry name" value="SecA_motor_DEAD"/>
</dbReference>
<dbReference type="InterPro" id="IPR011130">
    <property type="entry name" value="SecA_preprotein_X-link_dom"/>
</dbReference>
<dbReference type="InterPro" id="IPR044722">
    <property type="entry name" value="SecA_SF2_C"/>
</dbReference>
<dbReference type="InterPro" id="IPR011116">
    <property type="entry name" value="SecA_Wing/Scaffold"/>
</dbReference>
<dbReference type="InterPro" id="IPR036266">
    <property type="entry name" value="SecA_Wing/Scaffold_sf"/>
</dbReference>
<dbReference type="InterPro" id="IPR036670">
    <property type="entry name" value="SecA_X-link_sf"/>
</dbReference>
<dbReference type="NCBIfam" id="NF009538">
    <property type="entry name" value="PRK12904.1"/>
    <property type="match status" value="1"/>
</dbReference>
<dbReference type="NCBIfam" id="TIGR00963">
    <property type="entry name" value="secA"/>
    <property type="match status" value="1"/>
</dbReference>
<dbReference type="PANTHER" id="PTHR30612:SF0">
    <property type="entry name" value="CHLOROPLAST PROTEIN-TRANSPORTING ATPASE"/>
    <property type="match status" value="1"/>
</dbReference>
<dbReference type="PANTHER" id="PTHR30612">
    <property type="entry name" value="SECA INNER MEMBRANE COMPONENT OF SEC PROTEIN SECRETION SYSTEM"/>
    <property type="match status" value="1"/>
</dbReference>
<dbReference type="Pfam" id="PF21090">
    <property type="entry name" value="P-loop_SecA"/>
    <property type="match status" value="1"/>
</dbReference>
<dbReference type="Pfam" id="PF02810">
    <property type="entry name" value="SEC-C"/>
    <property type="match status" value="1"/>
</dbReference>
<dbReference type="Pfam" id="PF07517">
    <property type="entry name" value="SecA_DEAD"/>
    <property type="match status" value="1"/>
</dbReference>
<dbReference type="Pfam" id="PF01043">
    <property type="entry name" value="SecA_PP_bind"/>
    <property type="match status" value="1"/>
</dbReference>
<dbReference type="Pfam" id="PF07516">
    <property type="entry name" value="SecA_SW"/>
    <property type="match status" value="1"/>
</dbReference>
<dbReference type="PRINTS" id="PR00906">
    <property type="entry name" value="SECA"/>
</dbReference>
<dbReference type="SMART" id="SM00957">
    <property type="entry name" value="SecA_DEAD"/>
    <property type="match status" value="1"/>
</dbReference>
<dbReference type="SMART" id="SM00958">
    <property type="entry name" value="SecA_PP_bind"/>
    <property type="match status" value="1"/>
</dbReference>
<dbReference type="SUPFAM" id="SSF81886">
    <property type="entry name" value="Helical scaffold and wing domains of SecA"/>
    <property type="match status" value="1"/>
</dbReference>
<dbReference type="SUPFAM" id="SSF52540">
    <property type="entry name" value="P-loop containing nucleoside triphosphate hydrolases"/>
    <property type="match status" value="2"/>
</dbReference>
<dbReference type="SUPFAM" id="SSF81767">
    <property type="entry name" value="Pre-protein crosslinking domain of SecA"/>
    <property type="match status" value="1"/>
</dbReference>
<dbReference type="PROSITE" id="PS01312">
    <property type="entry name" value="SECA"/>
    <property type="match status" value="1"/>
</dbReference>
<dbReference type="PROSITE" id="PS51196">
    <property type="entry name" value="SECA_MOTOR_DEAD"/>
    <property type="match status" value="1"/>
</dbReference>
<sequence>MLGLGTLARKIFGTPNDRKVKSVRSLVARINDLEPEFQALSDEGIKQKTAEFQRRVQEGGESLDDLLPEAFANCREGARRALGLRAFDVQLMGGIFLHQGNIAEMKTGEGKTLVATFPAYLNALAGKGVHVVTVNDYLAKRDAEWMGKVYAQLGLATGVVYPFQSDEEKKAAYAADITYATNNELGFDYLRDNMKASKEEMRQRGHFFAIVDEVDSILIDEARTPLIISGPSQDRSDLYTKVDKLIPELVEEHYKLDEKTRNVTFTEEGNEFLEKRLLETGLLPEGQSLYDPESTTIVHHVNQGLRAHKLFNRDQQYIVRDDEIMLIDEFTGRMMRGRRLSDGLHQAIEAKEGVSIQPENVTLASVTFQNYFRLYEKLGGMTGTAATEAEEFMEIYGLGVVEVPTNRPVARADEHDAVYRTAREKHDGIVASIKDAHERGQPILVGTTSIDKSEALSDLLKSAGIPHNVLNARQHEQEAQIVADAGKLGAVTIATNMAGRGTDIQLGGNVEMKVMQALAADPAAHPDEVRARIEAEHAEEKERVKEAGGLFVLGTERHESRRIDNQLRGRSGRQGDPGRSAFFLSLEDDLMRIFGSDRLDKVLSTLGMKEGEAIVHPWVNKSLEKAQAKVEARNFDIRKQLLKFDDVMNDQRKAIFSQRLEIMETEDLSEIAQDMRYQVIDDLIDQHMPPRSYADQWDIEGMHRAVQDKLGLDAPLAKWAQEEGVDQDVVRERLCEASDRQMTEKAEAFGPETMRSIEKQILLQTIDAKWREHLLTLEHLRSVVGFRGYAQRDPLSEYKTEAFALFESMLNSLRQDVTQKLAQVRPLSEEEQQAMMRQFLDQQRAAAAAEAPVAPAPQPAAAAPQPTPELVGAEAGEPDPAAWGNVARNDPCPCGSGLKYKHCHGRLD</sequence>
<organism>
    <name type="scientific">Cereibacter sphaeroides (strain KD131 / KCTC 12085)</name>
    <name type="common">Rhodobacter sphaeroides</name>
    <dbReference type="NCBI Taxonomy" id="557760"/>
    <lineage>
        <taxon>Bacteria</taxon>
        <taxon>Pseudomonadati</taxon>
        <taxon>Pseudomonadota</taxon>
        <taxon>Alphaproteobacteria</taxon>
        <taxon>Rhodobacterales</taxon>
        <taxon>Paracoccaceae</taxon>
        <taxon>Cereibacter</taxon>
    </lineage>
</organism>
<keyword id="KW-0067">ATP-binding</keyword>
<keyword id="KW-0997">Cell inner membrane</keyword>
<keyword id="KW-1003">Cell membrane</keyword>
<keyword id="KW-0963">Cytoplasm</keyword>
<keyword id="KW-0472">Membrane</keyword>
<keyword id="KW-0479">Metal-binding</keyword>
<keyword id="KW-0547">Nucleotide-binding</keyword>
<keyword id="KW-0653">Protein transport</keyword>
<keyword id="KW-1278">Translocase</keyword>
<keyword id="KW-0811">Translocation</keyword>
<keyword id="KW-0813">Transport</keyword>
<keyword id="KW-0862">Zinc</keyword>
<protein>
    <recommendedName>
        <fullName evidence="1">Protein translocase subunit SecA</fullName>
        <ecNumber evidence="1">7.4.2.8</ecNumber>
    </recommendedName>
</protein>
<name>SECA_CERSK</name>
<feature type="chain" id="PRO_1000184243" description="Protein translocase subunit SecA">
    <location>
        <begin position="1"/>
        <end position="908"/>
    </location>
</feature>
<feature type="region of interest" description="Disordered" evidence="2">
    <location>
        <begin position="846"/>
        <end position="884"/>
    </location>
</feature>
<feature type="compositionally biased region" description="Low complexity" evidence="2">
    <location>
        <begin position="846"/>
        <end position="864"/>
    </location>
</feature>
<feature type="binding site" evidence="1">
    <location>
        <position position="90"/>
    </location>
    <ligand>
        <name>ATP</name>
        <dbReference type="ChEBI" id="CHEBI:30616"/>
    </ligand>
</feature>
<feature type="binding site" evidence="1">
    <location>
        <begin position="108"/>
        <end position="112"/>
    </location>
    <ligand>
        <name>ATP</name>
        <dbReference type="ChEBI" id="CHEBI:30616"/>
    </ligand>
</feature>
<feature type="binding site" evidence="1">
    <location>
        <position position="503"/>
    </location>
    <ligand>
        <name>ATP</name>
        <dbReference type="ChEBI" id="CHEBI:30616"/>
    </ligand>
</feature>
<feature type="binding site" evidence="1">
    <location>
        <position position="892"/>
    </location>
    <ligand>
        <name>Zn(2+)</name>
        <dbReference type="ChEBI" id="CHEBI:29105"/>
    </ligand>
</feature>
<feature type="binding site" evidence="1">
    <location>
        <position position="894"/>
    </location>
    <ligand>
        <name>Zn(2+)</name>
        <dbReference type="ChEBI" id="CHEBI:29105"/>
    </ligand>
</feature>
<feature type="binding site" evidence="1">
    <location>
        <position position="903"/>
    </location>
    <ligand>
        <name>Zn(2+)</name>
        <dbReference type="ChEBI" id="CHEBI:29105"/>
    </ligand>
</feature>
<feature type="binding site" evidence="1">
    <location>
        <position position="904"/>
    </location>
    <ligand>
        <name>Zn(2+)</name>
        <dbReference type="ChEBI" id="CHEBI:29105"/>
    </ligand>
</feature>
<reference key="1">
    <citation type="journal article" date="2009" name="J. Bacteriol.">
        <title>Complete genome sequence of Rhodobacter sphaeroides KD131.</title>
        <authorList>
            <person name="Lim S.-K."/>
            <person name="Kim S.J."/>
            <person name="Cha S.H."/>
            <person name="Oh Y.-K."/>
            <person name="Rhee H.-J."/>
            <person name="Kim M.-S."/>
            <person name="Lee J.K."/>
        </authorList>
    </citation>
    <scope>NUCLEOTIDE SEQUENCE [LARGE SCALE GENOMIC DNA]</scope>
    <source>
        <strain>KD131 / KCTC 12085</strain>
    </source>
</reference>
<comment type="function">
    <text evidence="1">Part of the Sec protein translocase complex. Interacts with the SecYEG preprotein conducting channel. Has a central role in coupling the hydrolysis of ATP to the transfer of proteins into and across the cell membrane, serving both as a receptor for the preprotein-SecB complex and as an ATP-driven molecular motor driving the stepwise translocation of polypeptide chains across the membrane.</text>
</comment>
<comment type="catalytic activity">
    <reaction evidence="1">
        <text>ATP + H2O + cellular proteinSide 1 = ADP + phosphate + cellular proteinSide 2.</text>
        <dbReference type="EC" id="7.4.2.8"/>
    </reaction>
</comment>
<comment type="cofactor">
    <cofactor evidence="1">
        <name>Zn(2+)</name>
        <dbReference type="ChEBI" id="CHEBI:29105"/>
    </cofactor>
    <text evidence="1">May bind 1 zinc ion per subunit.</text>
</comment>
<comment type="subunit">
    <text evidence="1">Monomer and homodimer. Part of the essential Sec protein translocation apparatus which comprises SecA, SecYEG and auxiliary proteins SecDF-YajC and YidC.</text>
</comment>
<comment type="subcellular location">
    <subcellularLocation>
        <location evidence="1">Cell inner membrane</location>
        <topology evidence="1">Peripheral membrane protein</topology>
        <orientation evidence="1">Cytoplasmic side</orientation>
    </subcellularLocation>
    <subcellularLocation>
        <location evidence="1">Cytoplasm</location>
    </subcellularLocation>
    <text evidence="1">Distribution is 50-50.</text>
</comment>
<comment type="similarity">
    <text evidence="1">Belongs to the SecA family.</text>
</comment>
<gene>
    <name evidence="1" type="primary">secA</name>
    <name type="ordered locus">RSKD131_2565</name>
</gene>
<proteinExistence type="inferred from homology"/>
<evidence type="ECO:0000255" key="1">
    <source>
        <dbReference type="HAMAP-Rule" id="MF_01382"/>
    </source>
</evidence>
<evidence type="ECO:0000256" key="2">
    <source>
        <dbReference type="SAM" id="MobiDB-lite"/>
    </source>
</evidence>
<accession>B9KPP0</accession>